<evidence type="ECO:0000255" key="1">
    <source>
        <dbReference type="HAMAP-Rule" id="MF_01276"/>
    </source>
</evidence>
<evidence type="ECO:0000305" key="2"/>
<accession>Q8XAN1</accession>
<accession>Q7AAP3</accession>
<name>PAT_ECO57</name>
<proteinExistence type="inferred from homology"/>
<gene>
    <name evidence="1" type="primary">patA</name>
    <name type="ordered locus">Z4426</name>
    <name type="ordered locus">ECs3955</name>
</gene>
<comment type="function">
    <text evidence="1">Catalyzes the aminotransferase reaction from putrescine to 2-oxoglutarate, leading to glutamate and 4-aminobutanal, which spontaneously cyclizes to form 1-pyrroline. This is the first step in one of two pathways for putrescine degradation, where putrescine is converted into 4-aminobutanoate (gamma-aminobutyrate or GABA) via 4-aminobutanal. Also functions as a cadaverine transaminase in a a L-lysine degradation pathway to succinate that proceeds via cadaverine, glutarate and L-2-hydroxyglutarate.</text>
</comment>
<comment type="catalytic activity">
    <reaction evidence="1">
        <text>an alkane-alpha,omega-diamine + 2-oxoglutarate = an omega-aminoaldehyde + L-glutamate</text>
        <dbReference type="Rhea" id="RHEA:18217"/>
        <dbReference type="Rhea" id="RHEA-COMP:9766"/>
        <dbReference type="Rhea" id="RHEA-COMP:12750"/>
        <dbReference type="ChEBI" id="CHEBI:16810"/>
        <dbReference type="ChEBI" id="CHEBI:29985"/>
        <dbReference type="ChEBI" id="CHEBI:70977"/>
        <dbReference type="ChEBI" id="CHEBI:133427"/>
        <dbReference type="EC" id="2.6.1.29"/>
    </reaction>
    <physiologicalReaction direction="left-to-right" evidence="1">
        <dbReference type="Rhea" id="RHEA:18218"/>
    </physiologicalReaction>
</comment>
<comment type="catalytic activity">
    <reaction evidence="1">
        <text>putrescine + 2-oxoglutarate = 1-pyrroline + L-glutamate + H2O</text>
        <dbReference type="Rhea" id="RHEA:12268"/>
        <dbReference type="ChEBI" id="CHEBI:15377"/>
        <dbReference type="ChEBI" id="CHEBI:16810"/>
        <dbReference type="ChEBI" id="CHEBI:29985"/>
        <dbReference type="ChEBI" id="CHEBI:36781"/>
        <dbReference type="ChEBI" id="CHEBI:326268"/>
        <dbReference type="EC" id="2.6.1.82"/>
    </reaction>
    <physiologicalReaction direction="left-to-right" evidence="1">
        <dbReference type="Rhea" id="RHEA:12269"/>
    </physiologicalReaction>
</comment>
<comment type="catalytic activity">
    <reaction evidence="1">
        <text>cadaverine + 2-oxoglutarate = 5-aminopentanal + L-glutamate</text>
        <dbReference type="Rhea" id="RHEA:61624"/>
        <dbReference type="ChEBI" id="CHEBI:16810"/>
        <dbReference type="ChEBI" id="CHEBI:29985"/>
        <dbReference type="ChEBI" id="CHEBI:58384"/>
        <dbReference type="ChEBI" id="CHEBI:144896"/>
    </reaction>
    <physiologicalReaction direction="left-to-right" evidence="1">
        <dbReference type="Rhea" id="RHEA:61625"/>
    </physiologicalReaction>
</comment>
<comment type="cofactor">
    <cofactor evidence="1">
        <name>pyridoxal 5'-phosphate</name>
        <dbReference type="ChEBI" id="CHEBI:597326"/>
    </cofactor>
</comment>
<comment type="pathway">
    <text evidence="1">Amine and polyamine degradation; putrescine degradation; 4-aminobutanal from putrescine (transaminase route): step 1/1.</text>
</comment>
<comment type="similarity">
    <text evidence="1">Belongs to the class-III pyridoxal-phosphate-dependent aminotransferase family. Putrescine aminotransferase subfamily.</text>
</comment>
<comment type="sequence caution" evidence="2">
    <conflict type="erroneous initiation">
        <sequence resource="EMBL-CDS" id="AAG58206"/>
    </conflict>
</comment>
<comment type="sequence caution" evidence="2">
    <conflict type="erroneous initiation">
        <sequence resource="EMBL-CDS" id="BAB37378"/>
    </conflict>
</comment>
<keyword id="KW-0032">Aminotransferase</keyword>
<keyword id="KW-0663">Pyridoxal phosphate</keyword>
<keyword id="KW-1185">Reference proteome</keyword>
<keyword id="KW-0808">Transferase</keyword>
<reference key="1">
    <citation type="journal article" date="2001" name="Nature">
        <title>Genome sequence of enterohaemorrhagic Escherichia coli O157:H7.</title>
        <authorList>
            <person name="Perna N.T."/>
            <person name="Plunkett G. III"/>
            <person name="Burland V."/>
            <person name="Mau B."/>
            <person name="Glasner J.D."/>
            <person name="Rose D.J."/>
            <person name="Mayhew G.F."/>
            <person name="Evans P.S."/>
            <person name="Gregor J."/>
            <person name="Kirkpatrick H.A."/>
            <person name="Posfai G."/>
            <person name="Hackett J."/>
            <person name="Klink S."/>
            <person name="Boutin A."/>
            <person name="Shao Y."/>
            <person name="Miller L."/>
            <person name="Grotbeck E.J."/>
            <person name="Davis N.W."/>
            <person name="Lim A."/>
            <person name="Dimalanta E.T."/>
            <person name="Potamousis K."/>
            <person name="Apodaca J."/>
            <person name="Anantharaman T.S."/>
            <person name="Lin J."/>
            <person name="Yen G."/>
            <person name="Schwartz D.C."/>
            <person name="Welch R.A."/>
            <person name="Blattner F.R."/>
        </authorList>
    </citation>
    <scope>NUCLEOTIDE SEQUENCE [LARGE SCALE GENOMIC DNA]</scope>
    <source>
        <strain>O157:H7 / EDL933 / ATCC 700927 / EHEC</strain>
    </source>
</reference>
<reference key="2">
    <citation type="journal article" date="2001" name="DNA Res.">
        <title>Complete genome sequence of enterohemorrhagic Escherichia coli O157:H7 and genomic comparison with a laboratory strain K-12.</title>
        <authorList>
            <person name="Hayashi T."/>
            <person name="Makino K."/>
            <person name="Ohnishi M."/>
            <person name="Kurokawa K."/>
            <person name="Ishii K."/>
            <person name="Yokoyama K."/>
            <person name="Han C.-G."/>
            <person name="Ohtsubo E."/>
            <person name="Nakayama K."/>
            <person name="Murata T."/>
            <person name="Tanaka M."/>
            <person name="Tobe T."/>
            <person name="Iida T."/>
            <person name="Takami H."/>
            <person name="Honda T."/>
            <person name="Sasakawa C."/>
            <person name="Ogasawara N."/>
            <person name="Yasunaga T."/>
            <person name="Kuhara S."/>
            <person name="Shiba T."/>
            <person name="Hattori M."/>
            <person name="Shinagawa H."/>
        </authorList>
    </citation>
    <scope>NUCLEOTIDE SEQUENCE [LARGE SCALE GENOMIC DNA]</scope>
    <source>
        <strain>O157:H7 / Sakai / RIMD 0509952 / EHEC</strain>
    </source>
</reference>
<organism>
    <name type="scientific">Escherichia coli O157:H7</name>
    <dbReference type="NCBI Taxonomy" id="83334"/>
    <lineage>
        <taxon>Bacteria</taxon>
        <taxon>Pseudomonadati</taxon>
        <taxon>Pseudomonadota</taxon>
        <taxon>Gammaproteobacteria</taxon>
        <taxon>Enterobacterales</taxon>
        <taxon>Enterobacteriaceae</taxon>
        <taxon>Escherichia</taxon>
    </lineage>
</organism>
<dbReference type="EC" id="2.6.1.82" evidence="1"/>
<dbReference type="EC" id="2.6.1.29" evidence="1"/>
<dbReference type="EMBL" id="AE005174">
    <property type="protein sequence ID" value="AAG58206.1"/>
    <property type="status" value="ALT_INIT"/>
    <property type="molecule type" value="Genomic_DNA"/>
</dbReference>
<dbReference type="EMBL" id="BA000007">
    <property type="protein sequence ID" value="BAB37378.1"/>
    <property type="status" value="ALT_INIT"/>
    <property type="molecule type" value="Genomic_DNA"/>
</dbReference>
<dbReference type="PIR" id="B85968">
    <property type="entry name" value="B85968"/>
</dbReference>
<dbReference type="PIR" id="C91123">
    <property type="entry name" value="C91123"/>
</dbReference>
<dbReference type="RefSeq" id="NP_311982.3">
    <property type="nucleotide sequence ID" value="NC_002695.1"/>
</dbReference>
<dbReference type="SMR" id="Q8XAN1"/>
<dbReference type="STRING" id="155864.Z4426"/>
<dbReference type="GeneID" id="916214"/>
<dbReference type="KEGG" id="ece:Z4426"/>
<dbReference type="KEGG" id="ecs:ECs_3955"/>
<dbReference type="PATRIC" id="fig|386585.9.peg.4127"/>
<dbReference type="eggNOG" id="COG4992">
    <property type="taxonomic scope" value="Bacteria"/>
</dbReference>
<dbReference type="HOGENOM" id="CLU_016922_10_0_6"/>
<dbReference type="OMA" id="VCEGNFH"/>
<dbReference type="UniPathway" id="UPA00188">
    <property type="reaction ID" value="UER00290"/>
</dbReference>
<dbReference type="Proteomes" id="UP000000558">
    <property type="component" value="Chromosome"/>
</dbReference>
<dbReference type="Proteomes" id="UP000002519">
    <property type="component" value="Chromosome"/>
</dbReference>
<dbReference type="GO" id="GO:0019161">
    <property type="term" value="F:diamine transaminase activity"/>
    <property type="evidence" value="ECO:0007669"/>
    <property type="project" value="UniProtKB-EC"/>
</dbReference>
<dbReference type="GO" id="GO:0042802">
    <property type="term" value="F:identical protein binding"/>
    <property type="evidence" value="ECO:0007669"/>
    <property type="project" value="TreeGrafter"/>
</dbReference>
<dbReference type="GO" id="GO:0033094">
    <property type="term" value="F:putrescine--2-oxoglutarate transaminase activity"/>
    <property type="evidence" value="ECO:0007669"/>
    <property type="project" value="UniProtKB-UniRule"/>
</dbReference>
<dbReference type="GO" id="GO:0030170">
    <property type="term" value="F:pyridoxal phosphate binding"/>
    <property type="evidence" value="ECO:0007669"/>
    <property type="project" value="UniProtKB-UniRule"/>
</dbReference>
<dbReference type="GO" id="GO:0019477">
    <property type="term" value="P:L-lysine catabolic process"/>
    <property type="evidence" value="ECO:0007669"/>
    <property type="project" value="UniProtKB-UniRule"/>
</dbReference>
<dbReference type="GO" id="GO:0009447">
    <property type="term" value="P:putrescine catabolic process"/>
    <property type="evidence" value="ECO:0007669"/>
    <property type="project" value="UniProtKB-UniRule"/>
</dbReference>
<dbReference type="CDD" id="cd00610">
    <property type="entry name" value="OAT_like"/>
    <property type="match status" value="1"/>
</dbReference>
<dbReference type="FunFam" id="3.40.640.10:FF:000004">
    <property type="entry name" value="Acetylornithine aminotransferase"/>
    <property type="match status" value="1"/>
</dbReference>
<dbReference type="Gene3D" id="3.90.1150.10">
    <property type="entry name" value="Aspartate Aminotransferase, domain 1"/>
    <property type="match status" value="1"/>
</dbReference>
<dbReference type="Gene3D" id="3.40.640.10">
    <property type="entry name" value="Type I PLP-dependent aspartate aminotransferase-like (Major domain)"/>
    <property type="match status" value="1"/>
</dbReference>
<dbReference type="HAMAP" id="MF_01276">
    <property type="entry name" value="Putres_aminotrans_3"/>
    <property type="match status" value="1"/>
</dbReference>
<dbReference type="InterPro" id="IPR005814">
    <property type="entry name" value="Aminotrans_3"/>
</dbReference>
<dbReference type="InterPro" id="IPR049704">
    <property type="entry name" value="Aminotrans_3_PPA_site"/>
</dbReference>
<dbReference type="InterPro" id="IPR050103">
    <property type="entry name" value="Class-III_PLP-dep_AT"/>
</dbReference>
<dbReference type="InterPro" id="IPR017747">
    <property type="entry name" value="Putrescine_aminotransferase"/>
</dbReference>
<dbReference type="InterPro" id="IPR015424">
    <property type="entry name" value="PyrdxlP-dep_Trfase"/>
</dbReference>
<dbReference type="InterPro" id="IPR015421">
    <property type="entry name" value="PyrdxlP-dep_Trfase_major"/>
</dbReference>
<dbReference type="InterPro" id="IPR015422">
    <property type="entry name" value="PyrdxlP-dep_Trfase_small"/>
</dbReference>
<dbReference type="NCBIfam" id="NF008570">
    <property type="entry name" value="PRK11522.1"/>
    <property type="match status" value="1"/>
</dbReference>
<dbReference type="NCBIfam" id="TIGR03372">
    <property type="entry name" value="putres_am_tran"/>
    <property type="match status" value="1"/>
</dbReference>
<dbReference type="PANTHER" id="PTHR11986">
    <property type="entry name" value="AMINOTRANSFERASE CLASS III"/>
    <property type="match status" value="1"/>
</dbReference>
<dbReference type="PANTHER" id="PTHR11986:SF112">
    <property type="entry name" value="PUTRESCINE AMINOTRANSFERASE"/>
    <property type="match status" value="1"/>
</dbReference>
<dbReference type="Pfam" id="PF00202">
    <property type="entry name" value="Aminotran_3"/>
    <property type="match status" value="1"/>
</dbReference>
<dbReference type="PIRSF" id="PIRSF000521">
    <property type="entry name" value="Transaminase_4ab_Lys_Orn"/>
    <property type="match status" value="1"/>
</dbReference>
<dbReference type="SUPFAM" id="SSF53383">
    <property type="entry name" value="PLP-dependent transferases"/>
    <property type="match status" value="1"/>
</dbReference>
<dbReference type="PROSITE" id="PS00600">
    <property type="entry name" value="AA_TRANSFER_CLASS_3"/>
    <property type="match status" value="1"/>
</dbReference>
<feature type="chain" id="PRO_0000269728" description="Putrescine aminotransferase">
    <location>
        <begin position="1"/>
        <end position="459"/>
    </location>
</feature>
<feature type="binding site" description="in other chain" evidence="1">
    <location>
        <begin position="150"/>
        <end position="151"/>
    </location>
    <ligand>
        <name>pyridoxal 5'-phosphate</name>
        <dbReference type="ChEBI" id="CHEBI:597326"/>
        <note>ligand shared between dimeric partners</note>
    </ligand>
</feature>
<feature type="binding site" description="in other chain" evidence="1">
    <location>
        <position position="274"/>
    </location>
    <ligand>
        <name>pyridoxal 5'-phosphate</name>
        <dbReference type="ChEBI" id="CHEBI:597326"/>
        <note>ligand shared between dimeric partners</note>
    </ligand>
</feature>
<feature type="binding site" evidence="1">
    <location>
        <position position="332"/>
    </location>
    <ligand>
        <name>pyridoxal 5'-phosphate</name>
        <dbReference type="ChEBI" id="CHEBI:597326"/>
        <note>ligand shared between dimeric partners</note>
    </ligand>
</feature>
<feature type="modified residue" description="N6-(pyridoxal phosphate)lysine" evidence="1">
    <location>
        <position position="300"/>
    </location>
</feature>
<sequence>MNRLPSSASALACSAHALNLIEKRTLDHEEMKALNREVIEYFKEHVNPGFLEYRKSVTAGGDYGAVEWQAGGLNTLVDTQGQEFIDCLGGFGIFNVGHRNPVVVSAVQNQLAKQPLHSQELLDPLRAMLAKTLAALTPGKLKYSFFCNSGTESVEAALKLAKAYQSPRGKFTFIATSGAFHGKSLGALSATAKSTFRKPFMPLLPGFRHVPFGNIEAMRTALNECKKTGDDVAAVILEPIQGEGGVILPPPGYLTAVRKLCDEFGALMILDEVQTGMGRTGKMFACEHENVQPDILCLAKALGGGVMPIGATIATEEVFSVLFDNPFLHTTTFGGNPLACAAALATINVLLEQNLPAQAEQKGDMLLDGFRQLAREYPDLVQEARGKGMLMAIEFVDNEIGYNFASEMFRQRVLVAGTLNNAKTIRIEPPLTLTIEQCELVIKAARKALAAMRVSVEEA</sequence>
<protein>
    <recommendedName>
        <fullName evidence="1">Putrescine aminotransferase</fullName>
        <shortName evidence="1">PAT</shortName>
        <shortName evidence="1">PATase</shortName>
        <ecNumber evidence="1">2.6.1.82</ecNumber>
    </recommendedName>
    <alternativeName>
        <fullName evidence="1">Cadaverine transaminase</fullName>
    </alternativeName>
    <alternativeName>
        <fullName evidence="1">Diamine transaminase</fullName>
        <ecNumber evidence="1">2.6.1.29</ecNumber>
    </alternativeName>
    <alternativeName>
        <fullName evidence="1">Putrescine transaminase</fullName>
    </alternativeName>
    <alternativeName>
        <fullName evidence="1">Putrescine--2-oxoglutaric acid transaminase</fullName>
    </alternativeName>
</protein>